<proteinExistence type="inferred from homology"/>
<accession>B7LYX9</accession>
<name>YQGF_ECO8A</name>
<dbReference type="EC" id="3.1.-.-" evidence="1"/>
<dbReference type="EMBL" id="CU928160">
    <property type="protein sequence ID" value="CAQ99897.1"/>
    <property type="molecule type" value="Genomic_DNA"/>
</dbReference>
<dbReference type="SMR" id="B7LYX9"/>
<dbReference type="KEGG" id="ecr:ECIAI1_3082"/>
<dbReference type="HOGENOM" id="CLU_098240_3_0_6"/>
<dbReference type="GO" id="GO:0005829">
    <property type="term" value="C:cytosol"/>
    <property type="evidence" value="ECO:0007669"/>
    <property type="project" value="TreeGrafter"/>
</dbReference>
<dbReference type="GO" id="GO:0004518">
    <property type="term" value="F:nuclease activity"/>
    <property type="evidence" value="ECO:0007669"/>
    <property type="project" value="UniProtKB-KW"/>
</dbReference>
<dbReference type="GO" id="GO:0000967">
    <property type="term" value="P:rRNA 5'-end processing"/>
    <property type="evidence" value="ECO:0007669"/>
    <property type="project" value="UniProtKB-UniRule"/>
</dbReference>
<dbReference type="CDD" id="cd16964">
    <property type="entry name" value="YqgF"/>
    <property type="match status" value="1"/>
</dbReference>
<dbReference type="FunFam" id="3.30.420.140:FF:000002">
    <property type="entry name" value="Putative pre-16S rRNA nuclease"/>
    <property type="match status" value="1"/>
</dbReference>
<dbReference type="Gene3D" id="3.30.420.140">
    <property type="entry name" value="YqgF/RNase H-like domain"/>
    <property type="match status" value="1"/>
</dbReference>
<dbReference type="HAMAP" id="MF_00651">
    <property type="entry name" value="Nuclease_YqgF"/>
    <property type="match status" value="1"/>
</dbReference>
<dbReference type="InterPro" id="IPR012337">
    <property type="entry name" value="RNaseH-like_sf"/>
</dbReference>
<dbReference type="InterPro" id="IPR005227">
    <property type="entry name" value="YqgF"/>
</dbReference>
<dbReference type="InterPro" id="IPR006641">
    <property type="entry name" value="YqgF/RNaseH-like_dom"/>
</dbReference>
<dbReference type="InterPro" id="IPR037027">
    <property type="entry name" value="YqgF/RNaseH-like_dom_sf"/>
</dbReference>
<dbReference type="NCBIfam" id="TIGR00250">
    <property type="entry name" value="RNAse_H_YqgF"/>
    <property type="match status" value="1"/>
</dbReference>
<dbReference type="PANTHER" id="PTHR33317">
    <property type="entry name" value="POLYNUCLEOTIDYL TRANSFERASE, RIBONUCLEASE H-LIKE SUPERFAMILY PROTEIN"/>
    <property type="match status" value="1"/>
</dbReference>
<dbReference type="PANTHER" id="PTHR33317:SF4">
    <property type="entry name" value="POLYNUCLEOTIDYL TRANSFERASE, RIBONUCLEASE H-LIKE SUPERFAMILY PROTEIN"/>
    <property type="match status" value="1"/>
</dbReference>
<dbReference type="Pfam" id="PF03652">
    <property type="entry name" value="RuvX"/>
    <property type="match status" value="1"/>
</dbReference>
<dbReference type="SMART" id="SM00732">
    <property type="entry name" value="YqgFc"/>
    <property type="match status" value="1"/>
</dbReference>
<dbReference type="SUPFAM" id="SSF53098">
    <property type="entry name" value="Ribonuclease H-like"/>
    <property type="match status" value="1"/>
</dbReference>
<sequence>MSGTLLAFDFGTKSIGVAVGQRITGTARPLPAIKAQDGTPDWNLIERLLKEWQPDEIIVGLPLNMDGTEQPLTARARKFANRIHGRFGVEVKLHDERLSTVEARSGLFEQGGYRALNKGKVDSASAVIILESYFEQGY</sequence>
<organism>
    <name type="scientific">Escherichia coli O8 (strain IAI1)</name>
    <dbReference type="NCBI Taxonomy" id="585034"/>
    <lineage>
        <taxon>Bacteria</taxon>
        <taxon>Pseudomonadati</taxon>
        <taxon>Pseudomonadota</taxon>
        <taxon>Gammaproteobacteria</taxon>
        <taxon>Enterobacterales</taxon>
        <taxon>Enterobacteriaceae</taxon>
        <taxon>Escherichia</taxon>
    </lineage>
</organism>
<comment type="function">
    <text evidence="1">Could be a nuclease involved in processing of the 5'-end of pre-16S rRNA.</text>
</comment>
<comment type="subcellular location">
    <subcellularLocation>
        <location evidence="1">Cytoplasm</location>
    </subcellularLocation>
</comment>
<comment type="similarity">
    <text evidence="1">Belongs to the YqgF nuclease family.</text>
</comment>
<reference key="1">
    <citation type="journal article" date="2009" name="PLoS Genet.">
        <title>Organised genome dynamics in the Escherichia coli species results in highly diverse adaptive paths.</title>
        <authorList>
            <person name="Touchon M."/>
            <person name="Hoede C."/>
            <person name="Tenaillon O."/>
            <person name="Barbe V."/>
            <person name="Baeriswyl S."/>
            <person name="Bidet P."/>
            <person name="Bingen E."/>
            <person name="Bonacorsi S."/>
            <person name="Bouchier C."/>
            <person name="Bouvet O."/>
            <person name="Calteau A."/>
            <person name="Chiapello H."/>
            <person name="Clermont O."/>
            <person name="Cruveiller S."/>
            <person name="Danchin A."/>
            <person name="Diard M."/>
            <person name="Dossat C."/>
            <person name="Karoui M.E."/>
            <person name="Frapy E."/>
            <person name="Garry L."/>
            <person name="Ghigo J.M."/>
            <person name="Gilles A.M."/>
            <person name="Johnson J."/>
            <person name="Le Bouguenec C."/>
            <person name="Lescat M."/>
            <person name="Mangenot S."/>
            <person name="Martinez-Jehanne V."/>
            <person name="Matic I."/>
            <person name="Nassif X."/>
            <person name="Oztas S."/>
            <person name="Petit M.A."/>
            <person name="Pichon C."/>
            <person name="Rouy Z."/>
            <person name="Ruf C.S."/>
            <person name="Schneider D."/>
            <person name="Tourret J."/>
            <person name="Vacherie B."/>
            <person name="Vallenet D."/>
            <person name="Medigue C."/>
            <person name="Rocha E.P.C."/>
            <person name="Denamur E."/>
        </authorList>
    </citation>
    <scope>NUCLEOTIDE SEQUENCE [LARGE SCALE GENOMIC DNA]</scope>
    <source>
        <strain>IAI1</strain>
    </source>
</reference>
<keyword id="KW-0963">Cytoplasm</keyword>
<keyword id="KW-0378">Hydrolase</keyword>
<keyword id="KW-0540">Nuclease</keyword>
<keyword id="KW-0690">Ribosome biogenesis</keyword>
<protein>
    <recommendedName>
        <fullName evidence="1">Putative pre-16S rRNA nuclease</fullName>
        <ecNumber evidence="1">3.1.-.-</ecNumber>
    </recommendedName>
</protein>
<feature type="chain" id="PRO_1000131030" description="Putative pre-16S rRNA nuclease">
    <location>
        <begin position="1"/>
        <end position="138"/>
    </location>
</feature>
<gene>
    <name evidence="1" type="primary">yqgF</name>
    <name type="ordered locus">ECIAI1_3082</name>
</gene>
<evidence type="ECO:0000255" key="1">
    <source>
        <dbReference type="HAMAP-Rule" id="MF_00651"/>
    </source>
</evidence>